<gene>
    <name type="primary">hctB</name>
</gene>
<feature type="chain" id="PRO_0000196022" description="Histone H1-like protein HC2">
    <location>
        <begin position="1"/>
        <end position="165"/>
    </location>
</feature>
<feature type="region of interest" description="Disordered" evidence="1">
    <location>
        <begin position="1"/>
        <end position="80"/>
    </location>
</feature>
<feature type="compositionally biased region" description="Basic residues" evidence="1">
    <location>
        <begin position="1"/>
        <end position="50"/>
    </location>
</feature>
<feature type="compositionally biased region" description="Basic residues" evidence="1">
    <location>
        <begin position="59"/>
        <end position="80"/>
    </location>
</feature>
<dbReference type="EMBL" id="L12962">
    <property type="protein sequence ID" value="AAA03752.1"/>
    <property type="molecule type" value="Unassigned_DNA"/>
</dbReference>
<dbReference type="PIR" id="JN0853">
    <property type="entry name" value="JN0853"/>
</dbReference>
<dbReference type="GO" id="GO:0003677">
    <property type="term" value="F:DNA binding"/>
    <property type="evidence" value="ECO:0007669"/>
    <property type="project" value="UniProtKB-KW"/>
</dbReference>
<dbReference type="GO" id="GO:0030527">
    <property type="term" value="F:structural constituent of chromatin"/>
    <property type="evidence" value="ECO:0007669"/>
    <property type="project" value="InterPro"/>
</dbReference>
<dbReference type="GO" id="GO:0030261">
    <property type="term" value="P:chromosome condensation"/>
    <property type="evidence" value="ECO:0007669"/>
    <property type="project" value="InterPro"/>
</dbReference>
<dbReference type="InterPro" id="IPR009970">
    <property type="entry name" value="HC2"/>
</dbReference>
<dbReference type="NCBIfam" id="NF038052">
    <property type="entry name" value="histone_lik_HC2"/>
    <property type="match status" value="2"/>
</dbReference>
<dbReference type="Pfam" id="PF07382">
    <property type="entry name" value="HC2"/>
    <property type="match status" value="1"/>
</dbReference>
<organism>
    <name type="scientific">Chlamydia trachomatis</name>
    <dbReference type="NCBI Taxonomy" id="813"/>
    <lineage>
        <taxon>Bacteria</taxon>
        <taxon>Pseudomonadati</taxon>
        <taxon>Chlamydiota</taxon>
        <taxon>Chlamydiia</taxon>
        <taxon>Chlamydiales</taxon>
        <taxon>Chlamydiaceae</taxon>
        <taxon>Chlamydia/Chlamydophila group</taxon>
        <taxon>Chlamydia</taxon>
    </lineage>
</organism>
<evidence type="ECO:0000256" key="1">
    <source>
        <dbReference type="SAM" id="MobiDB-lite"/>
    </source>
</evidence>
<evidence type="ECO:0000305" key="2"/>
<name>HC2B_CHLTH</name>
<protein>
    <recommendedName>
        <fullName>Histone H1-like protein HC2</fullName>
    </recommendedName>
    <alternativeName>
        <fullName>HC2 nucleoprotein</fullName>
    </alternativeName>
</protein>
<sequence>MLGVQKKRSTRKTAARKTVVRKPAAKKTAAKKAPVRKVAAKKTVARKTVAKKTVAARKPVAKKATAKKAPVRKVAAKKTVARKTVAKKTVAARKPVAKRVASTKKSSVAVKAGVCMKKHKHTAACGRVAASGVKVCASAAKRKTNPNRSRTAHSWRQQLMKLVAR</sequence>
<reference key="1">
    <citation type="journal article" date="1993" name="Gene">
        <title>Diversity in the Chlamydia trachomatis histone homologue Hc2.</title>
        <authorList>
            <person name="Hackstadt T."/>
            <person name="Brickman T.J."/>
            <person name="Barry C.E. III"/>
            <person name="Sager J."/>
        </authorList>
    </citation>
    <scope>NUCLEOTIDE SEQUENCE [GENOMIC DNA]</scope>
    <source>
        <strain>B/Tw-5/OT</strain>
    </source>
</reference>
<proteinExistence type="evidence at transcript level"/>
<comment type="function">
    <text>Might have a role in establishing the nucleoid structure of elementary bodies.</text>
</comment>
<comment type="developmental stage">
    <text>Specific to the EB (elementary body) form in the life cycle of chlamydiae.</text>
</comment>
<comment type="similarity">
    <text evidence="2">Belongs to the histone H1/H5 family. HCT subfamily.</text>
</comment>
<keyword id="KW-0238">DNA-binding</keyword>
<keyword id="KW-0677">Repeat</keyword>
<accession>Q06281</accession>